<proteinExistence type="inferred from homology"/>
<gene>
    <name evidence="1" type="primary">trhO</name>
    <name type="ordered locus">Jann_0011</name>
</gene>
<feature type="chain" id="PRO_0000242924" description="tRNA uridine(34) hydroxylase">
    <location>
        <begin position="1"/>
        <end position="301"/>
    </location>
</feature>
<feature type="domain" description="Rhodanese" evidence="1">
    <location>
        <begin position="120"/>
        <end position="214"/>
    </location>
</feature>
<feature type="active site" description="Cysteine persulfide intermediate" evidence="1">
    <location>
        <position position="174"/>
    </location>
</feature>
<comment type="function">
    <text evidence="1">Catalyzes oxygen-dependent 5-hydroxyuridine (ho5U) modification at position 34 in tRNAs.</text>
</comment>
<comment type="catalytic activity">
    <reaction evidence="1">
        <text>uridine(34) in tRNA + AH2 + O2 = 5-hydroxyuridine(34) in tRNA + A + H2O</text>
        <dbReference type="Rhea" id="RHEA:64224"/>
        <dbReference type="Rhea" id="RHEA-COMP:11727"/>
        <dbReference type="Rhea" id="RHEA-COMP:13381"/>
        <dbReference type="ChEBI" id="CHEBI:13193"/>
        <dbReference type="ChEBI" id="CHEBI:15377"/>
        <dbReference type="ChEBI" id="CHEBI:15379"/>
        <dbReference type="ChEBI" id="CHEBI:17499"/>
        <dbReference type="ChEBI" id="CHEBI:65315"/>
        <dbReference type="ChEBI" id="CHEBI:136877"/>
    </reaction>
</comment>
<comment type="similarity">
    <text evidence="1">Belongs to the TrhO family.</text>
</comment>
<evidence type="ECO:0000255" key="1">
    <source>
        <dbReference type="HAMAP-Rule" id="MF_00469"/>
    </source>
</evidence>
<reference key="1">
    <citation type="submission" date="2006-02" db="EMBL/GenBank/DDBJ databases">
        <title>Complete sequence of chromosome of Jannaschia sp. CCS1.</title>
        <authorList>
            <consortium name="US DOE Joint Genome Institute"/>
            <person name="Copeland A."/>
            <person name="Lucas S."/>
            <person name="Lapidus A."/>
            <person name="Barry K."/>
            <person name="Detter J.C."/>
            <person name="Glavina del Rio T."/>
            <person name="Hammon N."/>
            <person name="Israni S."/>
            <person name="Pitluck S."/>
            <person name="Brettin T."/>
            <person name="Bruce D."/>
            <person name="Han C."/>
            <person name="Tapia R."/>
            <person name="Gilna P."/>
            <person name="Chertkov O."/>
            <person name="Saunders E."/>
            <person name="Schmutz J."/>
            <person name="Larimer F."/>
            <person name="Land M."/>
            <person name="Kyrpides N."/>
            <person name="Lykidis A."/>
            <person name="Moran M.A."/>
            <person name="Belas R."/>
            <person name="Ye W."/>
            <person name="Buchan A."/>
            <person name="Gonzalez J.M."/>
            <person name="Schell M.A."/>
            <person name="Richardson P."/>
        </authorList>
    </citation>
    <scope>NUCLEOTIDE SEQUENCE [LARGE SCALE GENOMIC DNA]</scope>
    <source>
        <strain>CCS1</strain>
    </source>
</reference>
<sequence>MYVVAALYHFTRFADPDALRAPLRSIAEAGNVRGSLLLAPEGINGTIAGPRAGIDAVLAHIKGLPGCAGLEWKESTATAAPFGKLKVRLKTEIVSMGAPGLDPADVGTHVAPAEWNALISAPDVAVIDTRNAYEVEIGTFEGAVDPATESFRDFPAWWQANKHRFANQRIAMFCTGGIRCEKSTAYLKEQGVEEVFHLKGGILKYLEDVPEDQSLWQGGCFVFDERVAVGHGLAELPFDLCRACRHPISCEEKADLAFEEGVSCPRCMDVHSDADRARFRERQKQIALAKARGEAHLGAGD</sequence>
<dbReference type="EC" id="1.14.-.-" evidence="1"/>
<dbReference type="EMBL" id="CP000264">
    <property type="protein sequence ID" value="ABD52928.1"/>
    <property type="molecule type" value="Genomic_DNA"/>
</dbReference>
<dbReference type="RefSeq" id="WP_011453137.1">
    <property type="nucleotide sequence ID" value="NC_007802.1"/>
</dbReference>
<dbReference type="SMR" id="Q28WI9"/>
<dbReference type="STRING" id="290400.Jann_0011"/>
<dbReference type="KEGG" id="jan:Jann_0011"/>
<dbReference type="eggNOG" id="COG1054">
    <property type="taxonomic scope" value="Bacteria"/>
</dbReference>
<dbReference type="HOGENOM" id="CLU_038878_0_0_5"/>
<dbReference type="OrthoDB" id="9778326at2"/>
<dbReference type="Proteomes" id="UP000008326">
    <property type="component" value="Chromosome"/>
</dbReference>
<dbReference type="GO" id="GO:0016705">
    <property type="term" value="F:oxidoreductase activity, acting on paired donors, with incorporation or reduction of molecular oxygen"/>
    <property type="evidence" value="ECO:0007669"/>
    <property type="project" value="UniProtKB-UniRule"/>
</dbReference>
<dbReference type="GO" id="GO:0006400">
    <property type="term" value="P:tRNA modification"/>
    <property type="evidence" value="ECO:0007669"/>
    <property type="project" value="UniProtKB-UniRule"/>
</dbReference>
<dbReference type="CDD" id="cd01518">
    <property type="entry name" value="RHOD_YceA"/>
    <property type="match status" value="1"/>
</dbReference>
<dbReference type="Gene3D" id="3.30.70.100">
    <property type="match status" value="1"/>
</dbReference>
<dbReference type="Gene3D" id="3.40.250.10">
    <property type="entry name" value="Rhodanese-like domain"/>
    <property type="match status" value="1"/>
</dbReference>
<dbReference type="HAMAP" id="MF_00469">
    <property type="entry name" value="TrhO"/>
    <property type="match status" value="1"/>
</dbReference>
<dbReference type="InterPro" id="IPR001763">
    <property type="entry name" value="Rhodanese-like_dom"/>
</dbReference>
<dbReference type="InterPro" id="IPR036873">
    <property type="entry name" value="Rhodanese-like_dom_sf"/>
</dbReference>
<dbReference type="InterPro" id="IPR020936">
    <property type="entry name" value="TrhO"/>
</dbReference>
<dbReference type="InterPro" id="IPR040503">
    <property type="entry name" value="TRHO_N"/>
</dbReference>
<dbReference type="NCBIfam" id="NF001136">
    <property type="entry name" value="PRK00142.1-4"/>
    <property type="match status" value="1"/>
</dbReference>
<dbReference type="PANTHER" id="PTHR43268:SF3">
    <property type="entry name" value="RHODANESE-LIKE DOMAIN-CONTAINING PROTEIN 7-RELATED"/>
    <property type="match status" value="1"/>
</dbReference>
<dbReference type="PANTHER" id="PTHR43268">
    <property type="entry name" value="THIOSULFATE SULFURTRANSFERASE/RHODANESE-LIKE DOMAIN-CONTAINING PROTEIN 2"/>
    <property type="match status" value="1"/>
</dbReference>
<dbReference type="Pfam" id="PF00581">
    <property type="entry name" value="Rhodanese"/>
    <property type="match status" value="1"/>
</dbReference>
<dbReference type="Pfam" id="PF17773">
    <property type="entry name" value="UPF0176_N"/>
    <property type="match status" value="1"/>
</dbReference>
<dbReference type="SMART" id="SM00450">
    <property type="entry name" value="RHOD"/>
    <property type="match status" value="1"/>
</dbReference>
<dbReference type="SUPFAM" id="SSF52821">
    <property type="entry name" value="Rhodanese/Cell cycle control phosphatase"/>
    <property type="match status" value="1"/>
</dbReference>
<dbReference type="PROSITE" id="PS50206">
    <property type="entry name" value="RHODANESE_3"/>
    <property type="match status" value="1"/>
</dbReference>
<organism>
    <name type="scientific">Jannaschia sp. (strain CCS1)</name>
    <dbReference type="NCBI Taxonomy" id="290400"/>
    <lineage>
        <taxon>Bacteria</taxon>
        <taxon>Pseudomonadati</taxon>
        <taxon>Pseudomonadota</taxon>
        <taxon>Alphaproteobacteria</taxon>
        <taxon>Rhodobacterales</taxon>
        <taxon>Roseobacteraceae</taxon>
        <taxon>Jannaschia</taxon>
    </lineage>
</organism>
<protein>
    <recommendedName>
        <fullName evidence="1">tRNA uridine(34) hydroxylase</fullName>
        <ecNumber evidence="1">1.14.-.-</ecNumber>
    </recommendedName>
    <alternativeName>
        <fullName evidence="1">tRNA hydroxylation protein O</fullName>
    </alternativeName>
</protein>
<accession>Q28WI9</accession>
<name>TRHO_JANSC</name>
<keyword id="KW-0560">Oxidoreductase</keyword>
<keyword id="KW-1185">Reference proteome</keyword>
<keyword id="KW-0819">tRNA processing</keyword>